<sequence length="167" mass="18630">MRTLTIEPLTKEAFAPFGDVIETDGSDHFMINNGSTMRFHKLATVETATPEDNAIISIFRADAQDMPLTVSMLERHPLGSQAFIPLLGNPFLIVVAPLGDVPVSGLVRAFVTNGRQGINYHRGVWHHPVLTIEKRDDFLVVDRSGKGNNCDEHFFKEDERLILAPHQ</sequence>
<proteinExistence type="inferred from homology"/>
<dbReference type="EC" id="4.3.2.3" evidence="1"/>
<dbReference type="EMBL" id="CP000094">
    <property type="protein sequence ID" value="ABA73446.1"/>
    <property type="molecule type" value="Genomic_DNA"/>
</dbReference>
<dbReference type="RefSeq" id="WP_011333190.1">
    <property type="nucleotide sequence ID" value="NC_007492.2"/>
</dbReference>
<dbReference type="SMR" id="Q3KFL0"/>
<dbReference type="KEGG" id="pfo:Pfl01_1703"/>
<dbReference type="eggNOG" id="COG3194">
    <property type="taxonomic scope" value="Bacteria"/>
</dbReference>
<dbReference type="HOGENOM" id="CLU_070848_1_0_6"/>
<dbReference type="UniPathway" id="UPA00395"/>
<dbReference type="Proteomes" id="UP000002704">
    <property type="component" value="Chromosome"/>
</dbReference>
<dbReference type="GO" id="GO:0004848">
    <property type="term" value="F:ureidoglycolate hydrolase activity"/>
    <property type="evidence" value="ECO:0007669"/>
    <property type="project" value="InterPro"/>
</dbReference>
<dbReference type="GO" id="GO:0050385">
    <property type="term" value="F:ureidoglycolate lyase activity"/>
    <property type="evidence" value="ECO:0007669"/>
    <property type="project" value="UniProtKB-UniRule"/>
</dbReference>
<dbReference type="GO" id="GO:0000256">
    <property type="term" value="P:allantoin catabolic process"/>
    <property type="evidence" value="ECO:0007669"/>
    <property type="project" value="UniProtKB-UniRule"/>
</dbReference>
<dbReference type="GO" id="GO:0006145">
    <property type="term" value="P:purine nucleobase catabolic process"/>
    <property type="evidence" value="ECO:0007669"/>
    <property type="project" value="UniProtKB-UniRule"/>
</dbReference>
<dbReference type="CDD" id="cd20298">
    <property type="entry name" value="cupin_UAH"/>
    <property type="match status" value="1"/>
</dbReference>
<dbReference type="Gene3D" id="2.60.120.480">
    <property type="entry name" value="Ureidoglycolate hydrolase"/>
    <property type="match status" value="1"/>
</dbReference>
<dbReference type="HAMAP" id="MF_00616">
    <property type="entry name" value="Ureidogly_lyase"/>
    <property type="match status" value="1"/>
</dbReference>
<dbReference type="InterPro" id="IPR011051">
    <property type="entry name" value="RmlC_Cupin_sf"/>
</dbReference>
<dbReference type="InterPro" id="IPR047233">
    <property type="entry name" value="UAH_cupin"/>
</dbReference>
<dbReference type="InterPro" id="IPR007247">
    <property type="entry name" value="Ureidogly_lyase"/>
</dbReference>
<dbReference type="InterPro" id="IPR023525">
    <property type="entry name" value="Ureidogly_lyase_bac"/>
</dbReference>
<dbReference type="InterPro" id="IPR024060">
    <property type="entry name" value="Ureidoglycolate_lyase_dom_sf"/>
</dbReference>
<dbReference type="NCBIfam" id="NF002949">
    <property type="entry name" value="PRK03606.1-2"/>
    <property type="match status" value="1"/>
</dbReference>
<dbReference type="NCBIfam" id="NF009932">
    <property type="entry name" value="PRK13395.1"/>
    <property type="match status" value="1"/>
</dbReference>
<dbReference type="PANTHER" id="PTHR21221">
    <property type="entry name" value="UREIDOGLYCOLATE HYDROLASE"/>
    <property type="match status" value="1"/>
</dbReference>
<dbReference type="PANTHER" id="PTHR21221:SF1">
    <property type="entry name" value="UREIDOGLYCOLATE LYASE"/>
    <property type="match status" value="1"/>
</dbReference>
<dbReference type="Pfam" id="PF04115">
    <property type="entry name" value="Ureidogly_lyase"/>
    <property type="match status" value="1"/>
</dbReference>
<dbReference type="PIRSF" id="PIRSF017306">
    <property type="entry name" value="Ureidogly_hydro"/>
    <property type="match status" value="1"/>
</dbReference>
<dbReference type="SUPFAM" id="SSF51182">
    <property type="entry name" value="RmlC-like cupins"/>
    <property type="match status" value="1"/>
</dbReference>
<keyword id="KW-0456">Lyase</keyword>
<keyword id="KW-0659">Purine metabolism</keyword>
<evidence type="ECO:0000255" key="1">
    <source>
        <dbReference type="HAMAP-Rule" id="MF_00616"/>
    </source>
</evidence>
<accession>Q3KFL0</accession>
<comment type="function">
    <text evidence="1">Catalyzes the catabolism of the allantoin degradation intermediate (S)-ureidoglycolate, generating urea and glyoxylate. Involved in the utilization of allantoin as nitrogen source.</text>
</comment>
<comment type="catalytic activity">
    <reaction evidence="1">
        <text>(S)-ureidoglycolate = urea + glyoxylate</text>
        <dbReference type="Rhea" id="RHEA:11304"/>
        <dbReference type="ChEBI" id="CHEBI:16199"/>
        <dbReference type="ChEBI" id="CHEBI:36655"/>
        <dbReference type="ChEBI" id="CHEBI:57296"/>
        <dbReference type="EC" id="4.3.2.3"/>
    </reaction>
</comment>
<comment type="cofactor">
    <cofactor evidence="1">
        <name>Ni(2+)</name>
        <dbReference type="ChEBI" id="CHEBI:49786"/>
    </cofactor>
</comment>
<comment type="pathway">
    <text evidence="1">Nitrogen metabolism; (S)-allantoin degradation.</text>
</comment>
<comment type="subunit">
    <text evidence="1">Homodimer.</text>
</comment>
<comment type="similarity">
    <text evidence="1">Belongs to the ureidoglycolate lyase family.</text>
</comment>
<protein>
    <recommendedName>
        <fullName evidence="1">Ureidoglycolate lyase</fullName>
        <ecNumber evidence="1">4.3.2.3</ecNumber>
    </recommendedName>
    <alternativeName>
        <fullName evidence="1">Ureidoglycolatase</fullName>
    </alternativeName>
</protein>
<reference key="1">
    <citation type="journal article" date="2009" name="Genome Biol.">
        <title>Genomic and genetic analyses of diversity and plant interactions of Pseudomonas fluorescens.</title>
        <authorList>
            <person name="Silby M.W."/>
            <person name="Cerdeno-Tarraga A.M."/>
            <person name="Vernikos G.S."/>
            <person name="Giddens S.R."/>
            <person name="Jackson R.W."/>
            <person name="Preston G.M."/>
            <person name="Zhang X.-X."/>
            <person name="Moon C.D."/>
            <person name="Gehrig S.M."/>
            <person name="Godfrey S.A.C."/>
            <person name="Knight C.G."/>
            <person name="Malone J.G."/>
            <person name="Robinson Z."/>
            <person name="Spiers A.J."/>
            <person name="Harris S."/>
            <person name="Challis G.L."/>
            <person name="Yaxley A.M."/>
            <person name="Harris D."/>
            <person name="Seeger K."/>
            <person name="Murphy L."/>
            <person name="Rutter S."/>
            <person name="Squares R."/>
            <person name="Quail M.A."/>
            <person name="Saunders E."/>
            <person name="Mavromatis K."/>
            <person name="Brettin T.S."/>
            <person name="Bentley S.D."/>
            <person name="Hothersall J."/>
            <person name="Stephens E."/>
            <person name="Thomas C.M."/>
            <person name="Parkhill J."/>
            <person name="Levy S.B."/>
            <person name="Rainey P.B."/>
            <person name="Thomson N.R."/>
        </authorList>
    </citation>
    <scope>NUCLEOTIDE SEQUENCE [LARGE SCALE GENOMIC DNA]</scope>
    <source>
        <strain>Pf0-1</strain>
    </source>
</reference>
<organism>
    <name type="scientific">Pseudomonas fluorescens (strain Pf0-1)</name>
    <dbReference type="NCBI Taxonomy" id="205922"/>
    <lineage>
        <taxon>Bacteria</taxon>
        <taxon>Pseudomonadati</taxon>
        <taxon>Pseudomonadota</taxon>
        <taxon>Gammaproteobacteria</taxon>
        <taxon>Pseudomonadales</taxon>
        <taxon>Pseudomonadaceae</taxon>
        <taxon>Pseudomonas</taxon>
    </lineage>
</organism>
<name>ALLA_PSEPF</name>
<feature type="chain" id="PRO_1000061364" description="Ureidoglycolate lyase">
    <location>
        <begin position="1"/>
        <end position="167"/>
    </location>
</feature>
<gene>
    <name evidence="1" type="primary">allA</name>
    <name type="ordered locus">Pfl01_1703</name>
</gene>